<comment type="interaction">
    <interactant intactId="EBI-15193099">
        <id>Q940Y3</id>
    </interactant>
    <interactant intactId="EBI-15192335">
        <id>C0SUW7</id>
        <label>ARID6</label>
    </interactant>
    <organismsDiffer>false</organismsDiffer>
    <experiments>4</experiments>
</comment>
<comment type="subcellular location">
    <subcellularLocation>
        <location evidence="2">Nucleus</location>
    </subcellularLocation>
</comment>
<comment type="alternative products">
    <event type="alternative splicing"/>
    <isoform>
        <id>Q940Y3-1</id>
        <name>1</name>
        <sequence type="displayed"/>
    </isoform>
    <text>A number of isoforms are produced. According to EST sequences.</text>
</comment>
<comment type="similarity">
    <text evidence="1">Belongs to the small heat shock protein (HSP20) family.</text>
</comment>
<protein>
    <recommendedName>
        <fullName>AT-rich interactive domain-containing protein 3</fullName>
        <shortName>ARID domain-containing protein 3</shortName>
    </recommendedName>
</protein>
<accession>Q940Y3</accession>
<accession>Q67YT6</accession>
<reference key="1">
    <citation type="journal article" date="1999" name="Nature">
        <title>Sequence and analysis of chromosome 2 of the plant Arabidopsis thaliana.</title>
        <authorList>
            <person name="Lin X."/>
            <person name="Kaul S."/>
            <person name="Rounsley S.D."/>
            <person name="Shea T.P."/>
            <person name="Benito M.-I."/>
            <person name="Town C.D."/>
            <person name="Fujii C.Y."/>
            <person name="Mason T.M."/>
            <person name="Bowman C.L."/>
            <person name="Barnstead M.E."/>
            <person name="Feldblyum T.V."/>
            <person name="Buell C.R."/>
            <person name="Ketchum K.A."/>
            <person name="Lee J.J."/>
            <person name="Ronning C.M."/>
            <person name="Koo H.L."/>
            <person name="Moffat K.S."/>
            <person name="Cronin L.A."/>
            <person name="Shen M."/>
            <person name="Pai G."/>
            <person name="Van Aken S."/>
            <person name="Umayam L."/>
            <person name="Tallon L.J."/>
            <person name="Gill J.E."/>
            <person name="Adams M.D."/>
            <person name="Carrera A.J."/>
            <person name="Creasy T.H."/>
            <person name="Goodman H.M."/>
            <person name="Somerville C.R."/>
            <person name="Copenhaver G.P."/>
            <person name="Preuss D."/>
            <person name="Nierman W.C."/>
            <person name="White O."/>
            <person name="Eisen J.A."/>
            <person name="Salzberg S.L."/>
            <person name="Fraser C.M."/>
            <person name="Venter J.C."/>
        </authorList>
    </citation>
    <scope>NUCLEOTIDE SEQUENCE [LARGE SCALE GENOMIC DNA]</scope>
    <source>
        <strain>cv. Columbia</strain>
    </source>
</reference>
<reference key="2">
    <citation type="journal article" date="2017" name="Plant J.">
        <title>Araport11: a complete reannotation of the Arabidopsis thaliana reference genome.</title>
        <authorList>
            <person name="Cheng C.Y."/>
            <person name="Krishnakumar V."/>
            <person name="Chan A.P."/>
            <person name="Thibaud-Nissen F."/>
            <person name="Schobel S."/>
            <person name="Town C.D."/>
        </authorList>
    </citation>
    <scope>GENOME REANNOTATION</scope>
    <source>
        <strain>cv. Columbia</strain>
    </source>
</reference>
<reference key="3">
    <citation type="journal article" date="2003" name="Science">
        <title>Empirical analysis of transcriptional activity in the Arabidopsis genome.</title>
        <authorList>
            <person name="Yamada K."/>
            <person name="Lim J."/>
            <person name="Dale J.M."/>
            <person name="Chen H."/>
            <person name="Shinn P."/>
            <person name="Palm C.J."/>
            <person name="Southwick A.M."/>
            <person name="Wu H.C."/>
            <person name="Kim C.J."/>
            <person name="Nguyen M."/>
            <person name="Pham P.K."/>
            <person name="Cheuk R.F."/>
            <person name="Karlin-Newmann G."/>
            <person name="Liu S.X."/>
            <person name="Lam B."/>
            <person name="Sakano H."/>
            <person name="Wu T."/>
            <person name="Yu G."/>
            <person name="Miranda M."/>
            <person name="Quach H.L."/>
            <person name="Tripp M."/>
            <person name="Chang C.H."/>
            <person name="Lee J.M."/>
            <person name="Toriumi M.J."/>
            <person name="Chan M.M."/>
            <person name="Tang C.C."/>
            <person name="Onodera C.S."/>
            <person name="Deng J.M."/>
            <person name="Akiyama K."/>
            <person name="Ansari Y."/>
            <person name="Arakawa T."/>
            <person name="Banh J."/>
            <person name="Banno F."/>
            <person name="Bowser L."/>
            <person name="Brooks S.Y."/>
            <person name="Carninci P."/>
            <person name="Chao Q."/>
            <person name="Choy N."/>
            <person name="Enju A."/>
            <person name="Goldsmith A.D."/>
            <person name="Gurjal M."/>
            <person name="Hansen N.F."/>
            <person name="Hayashizaki Y."/>
            <person name="Johnson-Hopson C."/>
            <person name="Hsuan V.W."/>
            <person name="Iida K."/>
            <person name="Karnes M."/>
            <person name="Khan S."/>
            <person name="Koesema E."/>
            <person name="Ishida J."/>
            <person name="Jiang P.X."/>
            <person name="Jones T."/>
            <person name="Kawai J."/>
            <person name="Kamiya A."/>
            <person name="Meyers C."/>
            <person name="Nakajima M."/>
            <person name="Narusaka M."/>
            <person name="Seki M."/>
            <person name="Sakurai T."/>
            <person name="Satou M."/>
            <person name="Tamse R."/>
            <person name="Vaysberg M."/>
            <person name="Wallender E.K."/>
            <person name="Wong C."/>
            <person name="Yamamura Y."/>
            <person name="Yuan S."/>
            <person name="Shinozaki K."/>
            <person name="Davis R.W."/>
            <person name="Theologis A."/>
            <person name="Ecker J.R."/>
        </authorList>
    </citation>
    <scope>NUCLEOTIDE SEQUENCE [LARGE SCALE MRNA]</scope>
    <source>
        <strain>cv. Columbia</strain>
    </source>
</reference>
<reference key="4">
    <citation type="submission" date="2006-07" db="EMBL/GenBank/DDBJ databases">
        <title>Large-scale analysis of RIKEN Arabidopsis full-length (RAFL) cDNAs.</title>
        <authorList>
            <person name="Totoki Y."/>
            <person name="Seki M."/>
            <person name="Ishida J."/>
            <person name="Nakajima M."/>
            <person name="Enju A."/>
            <person name="Kamiya A."/>
            <person name="Narusaka M."/>
            <person name="Shin-i T."/>
            <person name="Nakagawa M."/>
            <person name="Sakamoto N."/>
            <person name="Oishi K."/>
            <person name="Kohara Y."/>
            <person name="Kobayashi M."/>
            <person name="Toyoda A."/>
            <person name="Sakaki Y."/>
            <person name="Sakurai T."/>
            <person name="Iida K."/>
            <person name="Akiyama K."/>
            <person name="Satou M."/>
            <person name="Toyoda T."/>
            <person name="Konagaya A."/>
            <person name="Carninci P."/>
            <person name="Kawai J."/>
            <person name="Hayashizaki Y."/>
            <person name="Shinozaki K."/>
        </authorList>
    </citation>
    <scope>NUCLEOTIDE SEQUENCE [LARGE SCALE MRNA]</scope>
    <source>
        <strain>cv. Columbia</strain>
    </source>
</reference>
<reference key="5">
    <citation type="journal article" date="2009" name="Plant Physiol.">
        <title>Large-scale Arabidopsis phosphoproteome profiling reveals novel chloroplast kinase substrates and phosphorylation networks.</title>
        <authorList>
            <person name="Reiland S."/>
            <person name="Messerli G."/>
            <person name="Baerenfaller K."/>
            <person name="Gerrits B."/>
            <person name="Endler A."/>
            <person name="Grossmann J."/>
            <person name="Gruissem W."/>
            <person name="Baginsky S."/>
        </authorList>
    </citation>
    <scope>IDENTIFICATION BY MASS SPECTROMETRY [LARGE SCALE ANALYSIS]</scope>
</reference>
<dbReference type="EMBL" id="CP002685">
    <property type="protein sequence ID" value="AEC06621.1"/>
    <property type="molecule type" value="Genomic_DNA"/>
</dbReference>
<dbReference type="EMBL" id="CP002685">
    <property type="protein sequence ID" value="ANM63318.1"/>
    <property type="molecule type" value="Genomic_DNA"/>
</dbReference>
<dbReference type="EMBL" id="AY052359">
    <property type="protein sequence ID" value="AAK96550.1"/>
    <property type="molecule type" value="mRNA"/>
</dbReference>
<dbReference type="EMBL" id="BT002633">
    <property type="protein sequence ID" value="AAO11549.1"/>
    <property type="molecule type" value="mRNA"/>
</dbReference>
<dbReference type="EMBL" id="AK176382">
    <property type="protein sequence ID" value="BAD44145.1"/>
    <property type="molecule type" value="mRNA"/>
</dbReference>
<dbReference type="EMBL" id="AK230281">
    <property type="protein sequence ID" value="BAF02083.1"/>
    <property type="molecule type" value="mRNA"/>
</dbReference>
<dbReference type="PIR" id="G84551">
    <property type="entry name" value="G84551"/>
</dbReference>
<dbReference type="RefSeq" id="NP_001325412.1">
    <molecule id="Q940Y3-1"/>
    <property type="nucleotide sequence ID" value="NM_001335547.1"/>
</dbReference>
<dbReference type="RefSeq" id="NP_179333.2">
    <molecule id="Q940Y3-1"/>
    <property type="nucleotide sequence ID" value="NM_127296.3"/>
</dbReference>
<dbReference type="SMR" id="Q940Y3"/>
<dbReference type="BioGRID" id="1604">
    <property type="interactions" value="8"/>
</dbReference>
<dbReference type="FunCoup" id="Q940Y3">
    <property type="interactions" value="1167"/>
</dbReference>
<dbReference type="IntAct" id="Q940Y3">
    <property type="interactions" value="5"/>
</dbReference>
<dbReference type="STRING" id="3702.Q940Y3"/>
<dbReference type="GlyGen" id="Q940Y3">
    <property type="glycosylation" value="1 site"/>
</dbReference>
<dbReference type="iPTMnet" id="Q940Y3"/>
<dbReference type="PaxDb" id="3702-AT2G17410.1"/>
<dbReference type="ProteomicsDB" id="246986">
    <molecule id="Q940Y3-1"/>
</dbReference>
<dbReference type="EnsemblPlants" id="AT2G17410.1">
    <molecule id="Q940Y3-1"/>
    <property type="protein sequence ID" value="AT2G17410.1"/>
    <property type="gene ID" value="AT2G17410"/>
</dbReference>
<dbReference type="EnsemblPlants" id="AT2G17410.3">
    <molecule id="Q940Y3-1"/>
    <property type="protein sequence ID" value="AT2G17410.3"/>
    <property type="gene ID" value="AT2G17410"/>
</dbReference>
<dbReference type="GeneID" id="816247"/>
<dbReference type="Gramene" id="AT2G17410.1">
    <molecule id="Q940Y3-1"/>
    <property type="protein sequence ID" value="AT2G17410.1"/>
    <property type="gene ID" value="AT2G17410"/>
</dbReference>
<dbReference type="Gramene" id="AT2G17410.3">
    <molecule id="Q940Y3-1"/>
    <property type="protein sequence ID" value="AT2G17410.3"/>
    <property type="gene ID" value="AT2G17410"/>
</dbReference>
<dbReference type="KEGG" id="ath:AT2G17410"/>
<dbReference type="Araport" id="AT2G17410"/>
<dbReference type="TAIR" id="AT2G17410">
    <property type="gene designation" value="ARID2"/>
</dbReference>
<dbReference type="eggNOG" id="ENOG502RZDH">
    <property type="taxonomic scope" value="Eukaryota"/>
</dbReference>
<dbReference type="HOGENOM" id="CLU_359179_0_0_1"/>
<dbReference type="InParanoid" id="Q940Y3"/>
<dbReference type="PhylomeDB" id="Q940Y3"/>
<dbReference type="CD-CODE" id="4299E36E">
    <property type="entry name" value="Nucleolus"/>
</dbReference>
<dbReference type="PRO" id="PR:Q940Y3"/>
<dbReference type="Proteomes" id="UP000006548">
    <property type="component" value="Chromosome 2"/>
</dbReference>
<dbReference type="ExpressionAtlas" id="Q940Y3">
    <property type="expression patterns" value="baseline and differential"/>
</dbReference>
<dbReference type="GO" id="GO:0005634">
    <property type="term" value="C:nucleus"/>
    <property type="evidence" value="ECO:0007669"/>
    <property type="project" value="UniProtKB-SubCell"/>
</dbReference>
<dbReference type="GO" id="GO:0032991">
    <property type="term" value="C:protein-containing complex"/>
    <property type="evidence" value="ECO:0000353"/>
    <property type="project" value="TAIR"/>
</dbReference>
<dbReference type="GO" id="GO:0003677">
    <property type="term" value="F:DNA binding"/>
    <property type="evidence" value="ECO:0007669"/>
    <property type="project" value="UniProtKB-KW"/>
</dbReference>
<dbReference type="GO" id="GO:0003700">
    <property type="term" value="F:DNA-binding transcription factor activity"/>
    <property type="evidence" value="ECO:0000250"/>
    <property type="project" value="TAIR"/>
</dbReference>
<dbReference type="GO" id="GO:0006355">
    <property type="term" value="P:regulation of DNA-templated transcription"/>
    <property type="evidence" value="ECO:0000304"/>
    <property type="project" value="TAIR"/>
</dbReference>
<dbReference type="GO" id="GO:0006357">
    <property type="term" value="P:regulation of transcription by RNA polymerase II"/>
    <property type="evidence" value="ECO:0007669"/>
    <property type="project" value="InterPro"/>
</dbReference>
<dbReference type="CDD" id="cd00298">
    <property type="entry name" value="ACD_sHsps_p23-like"/>
    <property type="match status" value="1"/>
</dbReference>
<dbReference type="CDD" id="cd16100">
    <property type="entry name" value="ARID"/>
    <property type="match status" value="1"/>
</dbReference>
<dbReference type="FunFam" id="1.10.150.60:FF:000009">
    <property type="entry name" value="AT-rich interactive domain-containing protein 3"/>
    <property type="match status" value="1"/>
</dbReference>
<dbReference type="FunFam" id="2.60.40.790:FF:000014">
    <property type="entry name" value="AT-rich interactive domain-containing protein 3"/>
    <property type="match status" value="1"/>
</dbReference>
<dbReference type="Gene3D" id="2.60.40.790">
    <property type="match status" value="1"/>
</dbReference>
<dbReference type="Gene3D" id="1.10.150.60">
    <property type="entry name" value="ARID DNA-binding domain"/>
    <property type="match status" value="1"/>
</dbReference>
<dbReference type="InterPro" id="IPR002068">
    <property type="entry name" value="A-crystallin/Hsp20_dom"/>
</dbReference>
<dbReference type="InterPro" id="IPR045147">
    <property type="entry name" value="ARI3A/B/C"/>
</dbReference>
<dbReference type="InterPro" id="IPR001606">
    <property type="entry name" value="ARID_dom"/>
</dbReference>
<dbReference type="InterPro" id="IPR036431">
    <property type="entry name" value="ARID_dom_sf"/>
</dbReference>
<dbReference type="InterPro" id="IPR008978">
    <property type="entry name" value="HSP20-like_chaperone"/>
</dbReference>
<dbReference type="PANTHER" id="PTHR15348">
    <property type="entry name" value="AT-RICH INTERACTIVE DOMAIN-CONTAINING PROTEIN ARID DOMAIN- CONTAINING PROTEIN DEAD RINGER PROTEIN B-CELL REGULATOR OF IGH TRANSCRIPTION BRIGHT"/>
    <property type="match status" value="1"/>
</dbReference>
<dbReference type="PANTHER" id="PTHR15348:SF0">
    <property type="entry name" value="PROTEIN DEAD RINGER"/>
    <property type="match status" value="1"/>
</dbReference>
<dbReference type="Pfam" id="PF01388">
    <property type="entry name" value="ARID"/>
    <property type="match status" value="1"/>
</dbReference>
<dbReference type="Pfam" id="PF00011">
    <property type="entry name" value="HSP20"/>
    <property type="match status" value="1"/>
</dbReference>
<dbReference type="SMART" id="SM01014">
    <property type="entry name" value="ARID"/>
    <property type="match status" value="1"/>
</dbReference>
<dbReference type="SMART" id="SM00501">
    <property type="entry name" value="BRIGHT"/>
    <property type="match status" value="1"/>
</dbReference>
<dbReference type="SUPFAM" id="SSF46774">
    <property type="entry name" value="ARID-like"/>
    <property type="match status" value="1"/>
</dbReference>
<dbReference type="SUPFAM" id="SSF49764">
    <property type="entry name" value="HSP20-like chaperones"/>
    <property type="match status" value="1"/>
</dbReference>
<dbReference type="PROSITE" id="PS51011">
    <property type="entry name" value="ARID"/>
    <property type="match status" value="1"/>
</dbReference>
<dbReference type="PROSITE" id="PS01031">
    <property type="entry name" value="SHSP"/>
    <property type="match status" value="1"/>
</dbReference>
<sequence length="786" mass="86570">MENLTEIESTMESLTEMESERVEQGTDKEIGSGEKRQDDVKETENENSGERVGEEAPVREHEDSPCLIVIEEGTSLASLEEVTNADDLPKIDDEKNSQFETSPHPSPSPSVALDTEEGLINPTAEDTVEENIVSSEVSSDILKDDGDAVEVDRDTAEVQEETANIPESKLSEDTGSPHHHADILMVQEKAAEEHDMIASGDHEEFPVNPDNKHSEENQSPHHHANNVMEQDQAAEEREIISPGEHKEIPANPDTKVVEENNDRIDEGEANNLNLAGDGSGAVDHDYLTKTELDKVLEVPGSETISKLEDRPSEHLSETSMNVEKELEMPAVEILPDNDKNSDVLAVGVSGDSDNVVSVLPASQTSSDRDEGMITVDAEPTEDMKLDVPDSKLVTDTTVDSTNNKDAHVEANTERQDNSSALVLNDANNESAPVKRVPGPYVASSNIKSEARGSGDLNNGVHKIVRTPPVFDGTMRAKRSFLLDDASDGNESGTEEDQSAFMKELDSFFRERNMDFKPPKFYGEGLNCLKLWRAVTRLGGYDKVTGSKLWRQVGESFRPPKTCTTVSWTFRGFYEKALLEYERHKVSEGELQIPLPLELEPMNIDNQASGSGRARRDAASRAMQGWHSQRLNGNGEVSDPAIKDKNLVLHQKREKQIGTTPGLLKRKRAAEHGAKNAIHVSKSMLDVTVVDVGPPADWVKINVQRTQDCFEVYALVPGLVREEVRVQSDPAGRLVISGEPENPMNPWGATPFKKVVSLPTRIDPHHTSAVVTLNGQLFVRVPLEQLE</sequence>
<keyword id="KW-0025">Alternative splicing</keyword>
<keyword id="KW-0238">DNA-binding</keyword>
<keyword id="KW-0539">Nucleus</keyword>
<keyword id="KW-1185">Reference proteome</keyword>
<keyword id="KW-0804">Transcription</keyword>
<keyword id="KW-0805">Transcription regulation</keyword>
<gene>
    <name type="primary">ARID3</name>
    <name type="ordered locus">At2g17410</name>
    <name type="ORF">F5J6.17</name>
</gene>
<name>ARID3_ARATH</name>
<evidence type="ECO:0000255" key="1">
    <source>
        <dbReference type="PROSITE-ProRule" id="PRU00285"/>
    </source>
</evidence>
<evidence type="ECO:0000255" key="2">
    <source>
        <dbReference type="PROSITE-ProRule" id="PRU00355"/>
    </source>
</evidence>
<evidence type="ECO:0000256" key="3">
    <source>
        <dbReference type="SAM" id="MobiDB-lite"/>
    </source>
</evidence>
<evidence type="ECO:0000305" key="4"/>
<organism>
    <name type="scientific">Arabidopsis thaliana</name>
    <name type="common">Mouse-ear cress</name>
    <dbReference type="NCBI Taxonomy" id="3702"/>
    <lineage>
        <taxon>Eukaryota</taxon>
        <taxon>Viridiplantae</taxon>
        <taxon>Streptophyta</taxon>
        <taxon>Embryophyta</taxon>
        <taxon>Tracheophyta</taxon>
        <taxon>Spermatophyta</taxon>
        <taxon>Magnoliopsida</taxon>
        <taxon>eudicotyledons</taxon>
        <taxon>Gunneridae</taxon>
        <taxon>Pentapetalae</taxon>
        <taxon>rosids</taxon>
        <taxon>malvids</taxon>
        <taxon>Brassicales</taxon>
        <taxon>Brassicaceae</taxon>
        <taxon>Camelineae</taxon>
        <taxon>Arabidopsis</taxon>
    </lineage>
</organism>
<proteinExistence type="evidence at protein level"/>
<feature type="chain" id="PRO_0000413211" description="AT-rich interactive domain-containing protein 3">
    <location>
        <begin position="1"/>
        <end position="786"/>
    </location>
</feature>
<feature type="domain" description="ARID" evidence="2">
    <location>
        <begin position="494"/>
        <end position="585"/>
    </location>
</feature>
<feature type="domain" description="sHSP" evidence="1">
    <location>
        <begin position="686"/>
        <end position="786"/>
    </location>
</feature>
<feature type="region of interest" description="Disordered" evidence="3">
    <location>
        <begin position="1"/>
        <end position="182"/>
    </location>
</feature>
<feature type="region of interest" description="Disordered" evidence="3">
    <location>
        <begin position="199"/>
        <end position="251"/>
    </location>
</feature>
<feature type="region of interest" description="Disordered" evidence="3">
    <location>
        <begin position="395"/>
        <end position="420"/>
    </location>
</feature>
<feature type="region of interest" description="Disordered" evidence="3">
    <location>
        <begin position="606"/>
        <end position="638"/>
    </location>
</feature>
<feature type="compositionally biased region" description="Low complexity" evidence="3">
    <location>
        <begin position="1"/>
        <end position="16"/>
    </location>
</feature>
<feature type="compositionally biased region" description="Basic and acidic residues" evidence="3">
    <location>
        <begin position="18"/>
        <end position="64"/>
    </location>
</feature>
<feature type="compositionally biased region" description="Basic and acidic residues" evidence="3">
    <location>
        <begin position="87"/>
        <end position="97"/>
    </location>
</feature>
<feature type="compositionally biased region" description="Low complexity" evidence="3">
    <location>
        <begin position="130"/>
        <end position="139"/>
    </location>
</feature>
<feature type="compositionally biased region" description="Basic and acidic residues" evidence="3">
    <location>
        <begin position="141"/>
        <end position="156"/>
    </location>
</feature>
<feature type="compositionally biased region" description="Basic and acidic residues" evidence="3">
    <location>
        <begin position="169"/>
        <end position="182"/>
    </location>
</feature>
<feature type="compositionally biased region" description="Basic and acidic residues" evidence="3">
    <location>
        <begin position="199"/>
        <end position="219"/>
    </location>
</feature>
<feature type="compositionally biased region" description="Basic and acidic residues" evidence="3">
    <location>
        <begin position="234"/>
        <end position="248"/>
    </location>
</feature>
<feature type="compositionally biased region" description="Basic and acidic residues" evidence="3">
    <location>
        <begin position="402"/>
        <end position="416"/>
    </location>
</feature>
<feature type="sequence conflict" description="In Ref. 4; BAD44145." evidence="4" ref="4">
    <original>L</original>
    <variation>S</variation>
    <location>
        <position position="662"/>
    </location>
</feature>